<sequence length="326" mass="36966">MHRTTRIKITELNPHLMCVLCGGYFIDATTIIECLHSFCKTCIVRYLETSKYCPICDVQVHKTRPLLNIRSDKTLQDIVYKLVPGLFKNEMKRRRDFYAAHPSADAANGSNEDRGEVADEDKRIITDDEIISLSIEFFDQNRLDRKINKDKEKSKEEVNDKRYLRCPAAMTVMHLRKFLRSKMDIPNTFQIDVMYEEEPLKDYYTLMDIAYIYTWRRNGPLPLKYRVRPTCKRMKISHQRDGLTNTGELESDSGSDKANSPAGGIPSTSSCLPSPSTPVQSPHPQFPHISSTMNGTSSSPSGNHQSSFANRPRKSSVNGSSATSSG</sequence>
<reference key="1">
    <citation type="submission" date="2005-11" db="EMBL/GenBank/DDBJ databases">
        <authorList>
            <consortium name="NIH - Mammalian Gene Collection (MGC) project"/>
        </authorList>
    </citation>
    <scope>NUCLEOTIDE SEQUENCE [LARGE SCALE MRNA]</scope>
    <source>
        <strain>Crossbred X Angus</strain>
        <tissue>Liver</tissue>
    </source>
</reference>
<dbReference type="EMBL" id="BC109871">
    <property type="protein sequence ID" value="AAI09872.1"/>
    <property type="molecule type" value="mRNA"/>
</dbReference>
<dbReference type="RefSeq" id="NP_001033161.1">
    <property type="nucleotide sequence ID" value="NM_001038072.2"/>
</dbReference>
<dbReference type="RefSeq" id="NP_001415259.1">
    <property type="nucleotide sequence ID" value="NM_001428330.1"/>
</dbReference>
<dbReference type="RefSeq" id="NP_001415260.1">
    <property type="nucleotide sequence ID" value="NM_001428331.1"/>
</dbReference>
<dbReference type="RefSeq" id="NP_001415261.1">
    <property type="nucleotide sequence ID" value="NM_001428332.1"/>
</dbReference>
<dbReference type="RefSeq" id="NP_001415262.1">
    <property type="nucleotide sequence ID" value="NM_001428333.1"/>
</dbReference>
<dbReference type="RefSeq" id="NP_001415263.1">
    <property type="nucleotide sequence ID" value="NM_001428334.1"/>
</dbReference>
<dbReference type="SMR" id="Q32KX7"/>
<dbReference type="FunCoup" id="Q32KX7">
    <property type="interactions" value="2011"/>
</dbReference>
<dbReference type="STRING" id="9913.ENSBTAP00000058683"/>
<dbReference type="PaxDb" id="9913-ENSBTAP00000020705"/>
<dbReference type="GeneID" id="510666"/>
<dbReference type="KEGG" id="bta:510666"/>
<dbReference type="CTD" id="648"/>
<dbReference type="VEuPathDB" id="HostDB:ENSBTAG00000015584"/>
<dbReference type="eggNOG" id="KOG2660">
    <property type="taxonomic scope" value="Eukaryota"/>
</dbReference>
<dbReference type="HOGENOM" id="CLU_046427_0_0_1"/>
<dbReference type="InParanoid" id="Q32KX7"/>
<dbReference type="OMA" id="QANDKRY"/>
<dbReference type="OrthoDB" id="1305878at2759"/>
<dbReference type="TreeFam" id="TF324206"/>
<dbReference type="Reactome" id="R-BTA-2559580">
    <property type="pathway name" value="Oxidative Stress Induced Senescence"/>
</dbReference>
<dbReference type="Reactome" id="R-BTA-3108214">
    <property type="pathway name" value="SUMOylation of DNA damage response and repair proteins"/>
</dbReference>
<dbReference type="Reactome" id="R-BTA-3899300">
    <property type="pathway name" value="SUMOylation of transcription cofactors"/>
</dbReference>
<dbReference type="Reactome" id="R-BTA-4551638">
    <property type="pathway name" value="SUMOylation of chromatin organization proteins"/>
</dbReference>
<dbReference type="Reactome" id="R-BTA-4570464">
    <property type="pathway name" value="SUMOylation of RNA binding proteins"/>
</dbReference>
<dbReference type="Reactome" id="R-BTA-8939243">
    <property type="pathway name" value="RUNX1 interacts with co-factors whose precise effect on RUNX1 targets is not known"/>
</dbReference>
<dbReference type="Reactome" id="R-BTA-8953750">
    <property type="pathway name" value="Transcriptional Regulation by E2F6"/>
</dbReference>
<dbReference type="Proteomes" id="UP000009136">
    <property type="component" value="Chromosome 13"/>
</dbReference>
<dbReference type="GO" id="GO:0005829">
    <property type="term" value="C:cytosol"/>
    <property type="evidence" value="ECO:0007669"/>
    <property type="project" value="Ensembl"/>
</dbReference>
<dbReference type="GO" id="GO:0000792">
    <property type="term" value="C:heterochromatin"/>
    <property type="evidence" value="ECO:0007669"/>
    <property type="project" value="Ensembl"/>
</dbReference>
<dbReference type="GO" id="GO:0016604">
    <property type="term" value="C:nuclear body"/>
    <property type="evidence" value="ECO:0007669"/>
    <property type="project" value="Ensembl"/>
</dbReference>
<dbReference type="GO" id="GO:0031519">
    <property type="term" value="C:PcG protein complex"/>
    <property type="evidence" value="ECO:0000250"/>
    <property type="project" value="UniProtKB"/>
</dbReference>
<dbReference type="GO" id="GO:0035102">
    <property type="term" value="C:PRC1 complex"/>
    <property type="evidence" value="ECO:0000318"/>
    <property type="project" value="GO_Central"/>
</dbReference>
<dbReference type="GO" id="GO:0000151">
    <property type="term" value="C:ubiquitin ligase complex"/>
    <property type="evidence" value="ECO:0000250"/>
    <property type="project" value="UniProtKB"/>
</dbReference>
<dbReference type="GO" id="GO:1990841">
    <property type="term" value="F:promoter-specific chromatin binding"/>
    <property type="evidence" value="ECO:0000250"/>
    <property type="project" value="UniProtKB"/>
</dbReference>
<dbReference type="GO" id="GO:0071535">
    <property type="term" value="F:RING-like zinc finger domain binding"/>
    <property type="evidence" value="ECO:0007669"/>
    <property type="project" value="Ensembl"/>
</dbReference>
<dbReference type="GO" id="GO:0097027">
    <property type="term" value="F:ubiquitin-protein transferase activator activity"/>
    <property type="evidence" value="ECO:0007669"/>
    <property type="project" value="Ensembl"/>
</dbReference>
<dbReference type="GO" id="GO:0008270">
    <property type="term" value="F:zinc ion binding"/>
    <property type="evidence" value="ECO:0000250"/>
    <property type="project" value="UniProtKB"/>
</dbReference>
<dbReference type="GO" id="GO:0097190">
    <property type="term" value="P:apoptotic signaling pathway"/>
    <property type="evidence" value="ECO:0007669"/>
    <property type="project" value="Ensembl"/>
</dbReference>
<dbReference type="GO" id="GO:0007420">
    <property type="term" value="P:brain development"/>
    <property type="evidence" value="ECO:0007669"/>
    <property type="project" value="Ensembl"/>
</dbReference>
<dbReference type="GO" id="GO:0006338">
    <property type="term" value="P:chromatin remodeling"/>
    <property type="evidence" value="ECO:0000250"/>
    <property type="project" value="UniProtKB"/>
</dbReference>
<dbReference type="GO" id="GO:0006346">
    <property type="term" value="P:DNA methylation-dependent constitutive heterochromatin formation"/>
    <property type="evidence" value="ECO:0007669"/>
    <property type="project" value="Ensembl"/>
</dbReference>
<dbReference type="GO" id="GO:0048704">
    <property type="term" value="P:embryonic skeletal system morphogenesis"/>
    <property type="evidence" value="ECO:0007669"/>
    <property type="project" value="Ensembl"/>
</dbReference>
<dbReference type="GO" id="GO:0030097">
    <property type="term" value="P:hemopoiesis"/>
    <property type="evidence" value="ECO:0007669"/>
    <property type="project" value="Ensembl"/>
</dbReference>
<dbReference type="GO" id="GO:0006959">
    <property type="term" value="P:humoral immune response"/>
    <property type="evidence" value="ECO:0007669"/>
    <property type="project" value="Ensembl"/>
</dbReference>
<dbReference type="GO" id="GO:0001701">
    <property type="term" value="P:in utero embryonic development"/>
    <property type="evidence" value="ECO:0007669"/>
    <property type="project" value="Ensembl"/>
</dbReference>
<dbReference type="GO" id="GO:2001234">
    <property type="term" value="P:negative regulation of apoptotic signaling pathway"/>
    <property type="evidence" value="ECO:0007669"/>
    <property type="project" value="Ensembl"/>
</dbReference>
<dbReference type="GO" id="GO:0045814">
    <property type="term" value="P:negative regulation of gene expression, epigenetic"/>
    <property type="evidence" value="ECO:0000250"/>
    <property type="project" value="UniProtKB"/>
</dbReference>
<dbReference type="GO" id="GO:0000122">
    <property type="term" value="P:negative regulation of transcription by RNA polymerase II"/>
    <property type="evidence" value="ECO:0000318"/>
    <property type="project" value="GO_Central"/>
</dbReference>
<dbReference type="GO" id="GO:0030890">
    <property type="term" value="P:positive regulation of B cell proliferation"/>
    <property type="evidence" value="ECO:0007669"/>
    <property type="project" value="Ensembl"/>
</dbReference>
<dbReference type="GO" id="GO:0048146">
    <property type="term" value="P:positive regulation of fibroblast proliferation"/>
    <property type="evidence" value="ECO:0007669"/>
    <property type="project" value="Ensembl"/>
</dbReference>
<dbReference type="GO" id="GO:0033092">
    <property type="term" value="P:positive regulation of immature T cell proliferation in thymus"/>
    <property type="evidence" value="ECO:0007669"/>
    <property type="project" value="Ensembl"/>
</dbReference>
<dbReference type="GO" id="GO:0051443">
    <property type="term" value="P:positive regulation of ubiquitin-protein transferase activity"/>
    <property type="evidence" value="ECO:0000250"/>
    <property type="project" value="UniProtKB"/>
</dbReference>
<dbReference type="GO" id="GO:2000011">
    <property type="term" value="P:regulation of adaxial/abaxial pattern formation"/>
    <property type="evidence" value="ECO:0007669"/>
    <property type="project" value="Ensembl"/>
</dbReference>
<dbReference type="GO" id="GO:0021903">
    <property type="term" value="P:rostrocaudal neural tube patterning"/>
    <property type="evidence" value="ECO:0007669"/>
    <property type="project" value="Ensembl"/>
</dbReference>
<dbReference type="GO" id="GO:0048103">
    <property type="term" value="P:somatic stem cell division"/>
    <property type="evidence" value="ECO:0007669"/>
    <property type="project" value="Ensembl"/>
</dbReference>
<dbReference type="CDD" id="cd17165">
    <property type="entry name" value="RAWUL_PCGF4"/>
    <property type="match status" value="1"/>
</dbReference>
<dbReference type="CDD" id="cd16736">
    <property type="entry name" value="RING-HC_PCGF4"/>
    <property type="match status" value="1"/>
</dbReference>
<dbReference type="FunFam" id="3.10.20.90:FF:000106">
    <property type="entry name" value="Polycomb complex protein BMI-1"/>
    <property type="match status" value="1"/>
</dbReference>
<dbReference type="FunFam" id="3.30.40.10:FF:000082">
    <property type="entry name" value="Polycomb group ring finger 2"/>
    <property type="match status" value="1"/>
</dbReference>
<dbReference type="Gene3D" id="3.10.20.90">
    <property type="entry name" value="Phosphatidylinositol 3-kinase Catalytic Subunit, Chain A, domain 1"/>
    <property type="match status" value="1"/>
</dbReference>
<dbReference type="Gene3D" id="3.30.40.10">
    <property type="entry name" value="Zinc/RING finger domain, C3HC4 (zinc finger)"/>
    <property type="match status" value="1"/>
</dbReference>
<dbReference type="InterPro" id="IPR032443">
    <property type="entry name" value="RAWUL"/>
</dbReference>
<dbReference type="InterPro" id="IPR001841">
    <property type="entry name" value="Znf_RING"/>
</dbReference>
<dbReference type="InterPro" id="IPR013083">
    <property type="entry name" value="Znf_RING/FYVE/PHD"/>
</dbReference>
<dbReference type="InterPro" id="IPR017907">
    <property type="entry name" value="Znf_RING_CS"/>
</dbReference>
<dbReference type="PANTHER" id="PTHR10825:SF21">
    <property type="entry name" value="POLYCOMB COMPLEX PROTEIN BMI-1"/>
    <property type="match status" value="1"/>
</dbReference>
<dbReference type="PANTHER" id="PTHR10825">
    <property type="entry name" value="RING FINGER DOMAIN-CONTAINING, POLYCOMB GROUP COMPONENT"/>
    <property type="match status" value="1"/>
</dbReference>
<dbReference type="Pfam" id="PF16207">
    <property type="entry name" value="RAWUL"/>
    <property type="match status" value="1"/>
</dbReference>
<dbReference type="Pfam" id="PF13923">
    <property type="entry name" value="zf-C3HC4_2"/>
    <property type="match status" value="1"/>
</dbReference>
<dbReference type="SMART" id="SM00184">
    <property type="entry name" value="RING"/>
    <property type="match status" value="1"/>
</dbReference>
<dbReference type="SUPFAM" id="SSF57850">
    <property type="entry name" value="RING/U-box"/>
    <property type="match status" value="1"/>
</dbReference>
<dbReference type="PROSITE" id="PS00518">
    <property type="entry name" value="ZF_RING_1"/>
    <property type="match status" value="1"/>
</dbReference>
<dbReference type="PROSITE" id="PS50089">
    <property type="entry name" value="ZF_RING_2"/>
    <property type="match status" value="1"/>
</dbReference>
<evidence type="ECO:0000250" key="1"/>
<evidence type="ECO:0000250" key="2">
    <source>
        <dbReference type="UniProtKB" id="P25916"/>
    </source>
</evidence>
<evidence type="ECO:0000250" key="3">
    <source>
        <dbReference type="UniProtKB" id="P35226"/>
    </source>
</evidence>
<evidence type="ECO:0000255" key="4"/>
<evidence type="ECO:0000255" key="5">
    <source>
        <dbReference type="PROSITE-ProRule" id="PRU00175"/>
    </source>
</evidence>
<evidence type="ECO:0000256" key="6">
    <source>
        <dbReference type="SAM" id="MobiDB-lite"/>
    </source>
</evidence>
<comment type="function">
    <text evidence="3">Component of a Polycomb group (PcG) multiprotein PRC1-like complex, a complex class required to maintain the transcriptionally repressive state of many genes, including Hox genes, throughout development. PcG PRC1 complex acts via chromatin remodeling and modification of histones; it mediates monoubiquitination of histone H2A 'Lys-119', rendering chromatin heritably changed in its expressibility. The complex composed of RNF2, UB2D3 and BMI1 binds nucleosomes, and has activity only with nucleosomal histone H2A. In the PRC1-like complex, regulates the E3 ubiquitin-protein ligase activity of RNF2/RING2.</text>
</comment>
<comment type="subunit">
    <text evidence="2 3">Component of a PRC1-like complex. Identified in a PRC1-like HPRC-H complex with CBX2, CBX4, CBX8, PHC1, PHC2, PHC3 RING1 and RNF2. Interacts with RNF2/RING2 (By similarity). Interacts with RING1 (By similarity). Part of a complex that contains RNF2, UB2D3 and BMI1, where RNF2 and BMI1 form a tight heterodimer, and UB2D3 interacts only with RNF2. The complex composed of RNF2, UB2D3 and BMI1 binds nucleosomes, and has activity only with nucleosomal histone H2A. Interacts with CBX7 and CBX8. Interacts with SPOP. Part of a complex consisting of BMI1, CUL3 and SPOP. Interacts with E4F1. Interacts with PHC2 (By similarity). Interacts with zinc finger protein ZNF277 (By similarity). May be part of a complex including at least ZNF277, BMI1 and RNF2/RING2 (By similarity).</text>
</comment>
<comment type="subcellular location">
    <subcellularLocation>
        <location evidence="3">Nucleus</location>
    </subcellularLocation>
    <subcellularLocation>
        <location evidence="3">Cytoplasm</location>
    </subcellularLocation>
</comment>
<comment type="induction">
    <text evidence="2">Down-regulated by oxidative stress.</text>
</comment>
<comment type="PTM">
    <text evidence="1">May be polyubiquitinated; which does not lead to proteasomal degradation. Monoubiquitinated.</text>
</comment>
<protein>
    <recommendedName>
        <fullName>Polycomb complex protein BMI-1</fullName>
    </recommendedName>
    <alternativeName>
        <fullName>Polycomb group RING finger protein 4</fullName>
    </alternativeName>
</protein>
<name>BMI1_BOVIN</name>
<proteinExistence type="evidence at transcript level"/>
<organism>
    <name type="scientific">Bos taurus</name>
    <name type="common">Bovine</name>
    <dbReference type="NCBI Taxonomy" id="9913"/>
    <lineage>
        <taxon>Eukaryota</taxon>
        <taxon>Metazoa</taxon>
        <taxon>Chordata</taxon>
        <taxon>Craniata</taxon>
        <taxon>Vertebrata</taxon>
        <taxon>Euteleostomi</taxon>
        <taxon>Mammalia</taxon>
        <taxon>Eutheria</taxon>
        <taxon>Laurasiatheria</taxon>
        <taxon>Artiodactyla</taxon>
        <taxon>Ruminantia</taxon>
        <taxon>Pecora</taxon>
        <taxon>Bovidae</taxon>
        <taxon>Bovinae</taxon>
        <taxon>Bos</taxon>
    </lineage>
</organism>
<keyword id="KW-0156">Chromatin regulator</keyword>
<keyword id="KW-0963">Cytoplasm</keyword>
<keyword id="KW-0479">Metal-binding</keyword>
<keyword id="KW-0539">Nucleus</keyword>
<keyword id="KW-0656">Proto-oncogene</keyword>
<keyword id="KW-1185">Reference proteome</keyword>
<keyword id="KW-0678">Repressor</keyword>
<keyword id="KW-0804">Transcription</keyword>
<keyword id="KW-0805">Transcription regulation</keyword>
<keyword id="KW-0832">Ubl conjugation</keyword>
<keyword id="KW-0862">Zinc</keyword>
<keyword id="KW-0863">Zinc-finger</keyword>
<feature type="chain" id="PRO_0000281859" description="Polycomb complex protein BMI-1">
    <location>
        <begin position="1"/>
        <end position="326"/>
    </location>
</feature>
<feature type="zinc finger region" description="RING-type" evidence="5">
    <location>
        <begin position="18"/>
        <end position="57"/>
    </location>
</feature>
<feature type="region of interest" description="Interaction with PHC2" evidence="3">
    <location>
        <begin position="162"/>
        <end position="182"/>
    </location>
</feature>
<feature type="region of interest" description="Interaction with E4F1" evidence="3">
    <location>
        <begin position="164"/>
        <end position="228"/>
    </location>
</feature>
<feature type="region of interest" description="Disordered" evidence="6">
    <location>
        <begin position="236"/>
        <end position="326"/>
    </location>
</feature>
<feature type="short sequence motif" description="Nuclear localization signal" evidence="4">
    <location>
        <begin position="81"/>
        <end position="95"/>
    </location>
</feature>
<feature type="compositionally biased region" description="Low complexity" evidence="6">
    <location>
        <begin position="266"/>
        <end position="278"/>
    </location>
</feature>
<feature type="compositionally biased region" description="Low complexity" evidence="6">
    <location>
        <begin position="290"/>
        <end position="303"/>
    </location>
</feature>
<feature type="compositionally biased region" description="Low complexity" evidence="6">
    <location>
        <begin position="315"/>
        <end position="326"/>
    </location>
</feature>
<gene>
    <name type="primary">BMI1</name>
    <name type="synonym">PCGF4</name>
</gene>
<accession>Q32KX7</accession>